<evidence type="ECO:0000250" key="1"/>
<evidence type="ECO:0000269" key="2">
    <source>
    </source>
</evidence>
<evidence type="ECO:0000269" key="3">
    <source>
    </source>
</evidence>
<evidence type="ECO:0000269" key="4">
    <source>
    </source>
</evidence>
<evidence type="ECO:0000269" key="5">
    <source>
    </source>
</evidence>
<evidence type="ECO:0000269" key="6">
    <source>
    </source>
</evidence>
<evidence type="ECO:0000305" key="7"/>
<evidence type="ECO:0007829" key="8">
    <source>
        <dbReference type="PDB" id="1KCZ"/>
    </source>
</evidence>
<name>MAAL_CLOTT</name>
<feature type="chain" id="PRO_0000084547" description="Methylaspartate ammonia-lyase">
    <location>
        <begin position="1"/>
        <end position="413"/>
    </location>
</feature>
<feature type="active site" description="Proton acceptor" evidence="2 5">
    <location>
        <position position="331"/>
    </location>
</feature>
<feature type="binding site" evidence="1">
    <location>
        <position position="172"/>
    </location>
    <ligand>
        <name>(2S,3S)-3-methyl-L-aspartate</name>
        <dbReference type="ChEBI" id="CHEBI:58724"/>
    </ligand>
</feature>
<feature type="binding site" evidence="2 6">
    <location>
        <position position="238"/>
    </location>
    <ligand>
        <name>Mg(2+)</name>
        <dbReference type="ChEBI" id="CHEBI:18420"/>
    </ligand>
</feature>
<feature type="binding site" evidence="2 6">
    <location>
        <position position="273"/>
    </location>
    <ligand>
        <name>Mg(2+)</name>
        <dbReference type="ChEBI" id="CHEBI:18420"/>
    </ligand>
</feature>
<feature type="binding site" evidence="2 6">
    <location>
        <position position="307"/>
    </location>
    <ligand>
        <name>Mg(2+)</name>
        <dbReference type="ChEBI" id="CHEBI:18420"/>
    </ligand>
</feature>
<feature type="binding site">
    <location>
        <position position="329"/>
    </location>
    <ligand>
        <name>(2S,3S)-3-methyl-L-aspartate</name>
        <dbReference type="ChEBI" id="CHEBI:58724"/>
    </ligand>
</feature>
<feature type="binding site" evidence="1">
    <location>
        <begin position="360"/>
        <end position="361"/>
    </location>
    <ligand>
        <name>(2S,3S)-3-methyl-L-aspartate</name>
        <dbReference type="ChEBI" id="CHEBI:58724"/>
    </ligand>
</feature>
<feature type="binding site">
    <location>
        <position position="361"/>
    </location>
    <ligand>
        <name>(2S,3S)-3-methyl-L-aspartate</name>
        <dbReference type="ChEBI" id="CHEBI:58724"/>
    </ligand>
</feature>
<feature type="site" description="Transition state stabilizer">
    <location>
        <position position="194"/>
    </location>
</feature>
<feature type="mutagenesis site" description="It has very broad nucleophile scope and excellent regio- and diastereoselectivity in the amination reaction. This mutation strongly moves the specificity of MAL away from ammonia and towards methylamine. It is highly enantioselective." evidence="6">
    <original>Q</original>
    <variation>A</variation>
    <location>
        <position position="73"/>
    </location>
</feature>
<feature type="mutagenesis site" description="Strong (160-fold) decrease of the catalytic efficiency for deamination and slight (1.8-fold) decrease of affinity binding for L-threo-beta-methylaspartate. 7-fold decrease of the catalytic efficiency for amination and 20-fold decrease of affinity binding for mesaconate. It does not show any major conformational changes." evidence="5">
    <original>H</original>
    <variation>A</variation>
    <location>
        <position position="194"/>
    </location>
</feature>
<feature type="mutagenesis site" description="It abolishes deaminase and aminase activities and does not show any major conformational changes." evidence="5">
    <original>H</original>
    <variation>R</variation>
    <location>
        <position position="194"/>
    </location>
</feature>
<feature type="mutagenesis site" description="Very strong decrease of the catalytic efficiency for deamination, whereas the affinity binding for L-threo-beta-methylaspartate is not affected. Strong (240-fold) decrease of the catalytic efficiency for amination and slight (2.4-fold) decrease of affinity binding for mesaconate. It does not show any major conformational changes." evidence="5">
    <original>Q</original>
    <variation>A</variation>
    <location>
        <position position="329"/>
    </location>
</feature>
<feature type="mutagenesis site" description="It abolishes deaminase and aminase activities and does not show any major conformational changes." evidence="5">
    <original>Q</original>
    <variation>R</variation>
    <location>
        <position position="329"/>
    </location>
</feature>
<feature type="mutagenesis site" description="It abolishes deaminase and aminase activities and does not show any major conformational changes." evidence="5">
    <original>K</original>
    <variation>A</variation>
    <location>
        <position position="331"/>
    </location>
</feature>
<feature type="mutagenesis site" description="It abolishes deaminase and aminase activities and does not show any major conformational changes." evidence="5">
    <original>K</original>
    <variation>G</variation>
    <location>
        <position position="331"/>
    </location>
</feature>
<feature type="mutagenesis site" description="It abolishes deaminase and aminase activities and does not show any major conformational changes." evidence="5">
    <original>K</original>
    <variation>H</variation>
    <location>
        <position position="331"/>
    </location>
</feature>
<feature type="mutagenesis site" description="It abolishes deaminase and aminase activities and does not show any major conformational changes." evidence="5">
    <original>K</original>
    <variation>Q</variation>
    <location>
        <position position="331"/>
    </location>
</feature>
<feature type="mutagenesis site" description="It abolishes deaminase and aminase activities and does not show any major conformational changes." evidence="5">
    <original>K</original>
    <variation>R</variation>
    <location>
        <position position="331"/>
    </location>
</feature>
<feature type="mutagenesis site" description="It has very broad electrophile scope and excellent regio- and enantioselectivity in the amination reaction." evidence="6">
    <original>L</original>
    <variation>A</variation>
    <location>
        <position position="384"/>
    </location>
</feature>
<feature type="strand" evidence="8">
    <location>
        <begin position="2"/>
        <end position="11"/>
    </location>
</feature>
<feature type="strand" evidence="8">
    <location>
        <begin position="14"/>
        <end position="18"/>
    </location>
</feature>
<feature type="helix" evidence="8">
    <location>
        <begin position="20"/>
        <end position="24"/>
    </location>
</feature>
<feature type="strand" evidence="8">
    <location>
        <begin position="28"/>
        <end position="30"/>
    </location>
</feature>
<feature type="strand" evidence="8">
    <location>
        <begin position="33"/>
        <end position="36"/>
    </location>
</feature>
<feature type="strand" evidence="8">
    <location>
        <begin position="44"/>
        <end position="49"/>
    </location>
</feature>
<feature type="strand" evidence="8">
    <location>
        <begin position="52"/>
        <end position="59"/>
    </location>
</feature>
<feature type="strand" evidence="8">
    <location>
        <begin position="64"/>
        <end position="69"/>
    </location>
</feature>
<feature type="turn" evidence="8">
    <location>
        <begin position="73"/>
        <end position="76"/>
    </location>
</feature>
<feature type="helix" evidence="8">
    <location>
        <begin position="86"/>
        <end position="96"/>
    </location>
</feature>
<feature type="helix" evidence="8">
    <location>
        <begin position="98"/>
        <end position="101"/>
    </location>
</feature>
<feature type="helix" evidence="8">
    <location>
        <begin position="109"/>
        <end position="118"/>
    </location>
</feature>
<feature type="helix" evidence="8">
    <location>
        <begin position="128"/>
        <end position="146"/>
    </location>
</feature>
<feature type="helix" evidence="8">
    <location>
        <begin position="150"/>
        <end position="158"/>
    </location>
</feature>
<feature type="helix" evidence="8">
    <location>
        <begin position="179"/>
        <end position="186"/>
    </location>
</feature>
<feature type="strand" evidence="8">
    <location>
        <begin position="190"/>
        <end position="194"/>
    </location>
</feature>
<feature type="helix" evidence="8">
    <location>
        <begin position="200"/>
        <end position="204"/>
    </location>
</feature>
<feature type="helix" evidence="8">
    <location>
        <begin position="209"/>
        <end position="225"/>
    </location>
</feature>
<feature type="strand" evidence="8">
    <location>
        <begin position="234"/>
        <end position="238"/>
    </location>
</feature>
<feature type="helix" evidence="8">
    <location>
        <begin position="242"/>
        <end position="246"/>
    </location>
</feature>
<feature type="turn" evidence="8">
    <location>
        <begin position="247"/>
        <end position="249"/>
    </location>
</feature>
<feature type="helix" evidence="8">
    <location>
        <begin position="251"/>
        <end position="265"/>
    </location>
</feature>
<feature type="strand" evidence="8">
    <location>
        <begin position="270"/>
        <end position="273"/>
    </location>
</feature>
<feature type="helix" evidence="8">
    <location>
        <begin position="281"/>
        <end position="298"/>
    </location>
</feature>
<feature type="strand" evidence="8">
    <location>
        <begin position="302"/>
        <end position="306"/>
    </location>
</feature>
<feature type="helix" evidence="8">
    <location>
        <begin position="313"/>
        <end position="321"/>
    </location>
</feature>
<feature type="strand" evidence="8">
    <location>
        <begin position="325"/>
        <end position="330"/>
    </location>
</feature>
<feature type="helix" evidence="8">
    <location>
        <begin position="333"/>
        <end position="335"/>
    </location>
</feature>
<feature type="helix" evidence="8">
    <location>
        <begin position="339"/>
        <end position="350"/>
    </location>
</feature>
<feature type="strand" evidence="8">
    <location>
        <begin position="354"/>
        <end position="357"/>
    </location>
</feature>
<feature type="helix" evidence="8">
    <location>
        <begin position="365"/>
        <end position="378"/>
    </location>
</feature>
<feature type="strand" evidence="8">
    <location>
        <begin position="381"/>
        <end position="384"/>
    </location>
</feature>
<feature type="strand" evidence="8">
    <location>
        <begin position="387"/>
        <end position="391"/>
    </location>
</feature>
<feature type="helix" evidence="8">
    <location>
        <begin position="392"/>
        <end position="410"/>
    </location>
</feature>
<reference key="1">
    <citation type="journal article" date="1992" name="Biochemistry">
        <title>Cloning, sequencing, and expression in Escherichia coli of the Clostridium tetanomorphum gene encoding beta-methylaspartase and characterization of the recombinant protein.</title>
        <authorList>
            <person name="Goda S.K."/>
            <person name="Minton N.P."/>
            <person name="Botting N.P."/>
            <person name="Gani D."/>
        </authorList>
    </citation>
    <scope>NUCLEOTIDE SEQUENCE [GENOMIC DNA]</scope>
    <scope>PROTEIN SEQUENCE OF 1-26</scope>
    <scope>FUNCTION</scope>
    <scope>CATALYTIC ACTIVITY</scope>
    <scope>BIOPHYSICOCHEMICAL PROPERTIES</scope>
    <scope>SUBUNIT</scope>
    <source>
        <strain>ATCC 15920 / DSM 528 / NCIMB 11547 / H1</strain>
    </source>
</reference>
<reference key="2">
    <citation type="journal article" date="1993" name="FEBS Lett.">
        <title>Cloning and sequencing of glutamate mutase component E from Clostridium tetanomorphum.</title>
        <authorList>
            <person name="Brecht M."/>
            <person name="Kellermann J."/>
            <person name="Plueckthun A."/>
        </authorList>
    </citation>
    <scope>NUCLEOTIDE SEQUENCE [GENOMIC DNA] OF 1-24</scope>
    <scope>PROTEIN SEQUENCE OF 1-24</scope>
    <source>
        <strain>ATCC 15920 / DSM 528 / NCIMB 11547 / H1</strain>
    </source>
</reference>
<reference key="3">
    <citation type="journal article" date="1993" name="FEBS Lett.">
        <title>Cloning and sequencing of glutamate mutase component E from Clostridium tetanomorphum. Organization of the mut genes.</title>
        <authorList>
            <person name="Holloway D.E."/>
            <person name="Marsh E.N.G."/>
        </authorList>
    </citation>
    <scope>NUCLEOTIDE SEQUENCE [GENOMIC DNA] OF 1-71</scope>
    <source>
        <strain>ATCC 15920 / DSM 528 / NCIMB 11547 / H1</strain>
    </source>
</reference>
<reference key="4">
    <citation type="journal article" date="1992" name="FEBS Lett.">
        <title>Cloning and sequencing of glutamate mutase component S from Clostridium tetanomorphum. Homologies with other cobalamin-dependent enzymes.</title>
        <authorList>
            <person name="Marsh E.N.G."/>
            <person name="Holloway D.E."/>
        </authorList>
    </citation>
    <scope>PROTEIN SEQUENCE OF 1-15</scope>
    <source>
        <strain>ATCC 15920 / DSM 528 / NCIMB 11547 / H1</strain>
    </source>
</reference>
<reference key="5">
    <citation type="journal article" date="1959" name="J. Biol. Chem.">
        <title>The purification and properties of beta-methylaspartase.</title>
        <authorList>
            <person name="Barker H.A."/>
            <person name="Smyth R.D."/>
            <person name="Wilson R.M."/>
            <person name="Weissbach H."/>
        </authorList>
    </citation>
    <scope>FUNCTION</scope>
    <scope>CATALYTIC ACTIVITY</scope>
    <scope>BIOPHYSICOCHEMICAL PROPERTIES</scope>
    <scope>ACTIVITY REGULATION</scope>
    <scope>SUBSTRATE SPECIFICITY</scope>
    <scope>COFACTOR</scope>
    <source>
        <strain>ATCC 15920 / DSM 528 / NCIMB 11547 / H1</strain>
    </source>
</reference>
<reference key="6">
    <citation type="journal article" date="2009" name="ChemBioChem">
        <title>Alteration of the diastereoselectivity of 3-methylaspartate ammonia lyase by using structure-based mutagenesis.</title>
        <authorList>
            <person name="Raj H."/>
            <person name="Weiner B."/>
            <person name="Veetil V.P."/>
            <person name="Reis C.R."/>
            <person name="Quax W.J."/>
            <person name="Janssen D.B."/>
            <person name="Feringa B.L."/>
            <person name="Poelarends G.J."/>
        </authorList>
    </citation>
    <scope>FUNCTION</scope>
    <scope>CATALYTIC ACTIVITY</scope>
    <scope>BIOPHYSICOCHEMICAL PROPERTIES</scope>
    <scope>MUTAGENESIS OF HIS-194; GLN-329 AND LYS-331</scope>
    <scope>SUBSTRATE SPECIFICITY</scope>
    <scope>ACTIVE SITE</scope>
    <scope>SUBUNIT</scope>
    <source>
        <strain>ATCC 15920 / DSM 528 / NCIMB 11547 / H1</strain>
    </source>
</reference>
<reference key="7">
    <citation type="journal article" date="2002" name="J. Biol. Chem.">
        <title>The structure of 3-methylaspartase from Clostridium tetanomorphum functions via the common enolase chemical step.</title>
        <authorList>
            <person name="Asuncion M."/>
            <person name="Blankenfeldt W."/>
            <person name="Barlow J.N."/>
            <person name="Gani D."/>
            <person name="Naismith J.H."/>
        </authorList>
    </citation>
    <scope>X-RAY CRYSTALLOGRAPHY (1.90 ANGSTROMS) IN COMPLEX WITH MAGNESIUM</scope>
    <scope>ACTIVE SITE</scope>
    <scope>COFACTOR</scope>
    <scope>SUBUNIT</scope>
</reference>
<reference key="8">
    <citation type="journal article" date="2012" name="Nat. Chem.">
        <title>Engineering methylaspartate ammonia lyase for the asymmetric synthesis of unnatural amino acids.</title>
        <authorList>
            <person name="Raj H."/>
            <person name="Szymanski W."/>
            <person name="de Villiers J."/>
            <person name="Rozeboom H.J."/>
            <person name="Veetil V.P."/>
            <person name="Reis C.R."/>
            <person name="de Villiers M."/>
            <person name="Dekker F.J."/>
            <person name="de Wildeman S."/>
            <person name="Quax W.J."/>
            <person name="Thunnissen A.M."/>
            <person name="Feringa B.L."/>
            <person name="Janssen D.B."/>
            <person name="Poelarends G.J."/>
        </authorList>
    </citation>
    <scope>X-RAY CRYSTALLOGRAPHY (1.90 ANGSTROMS) IN COMPLEX WITH SUBSTRATE ANALOGS AND MAGNESIUM</scope>
    <scope>FUNCTION</scope>
    <scope>CATALYTIC ACTIVITY</scope>
    <scope>MUTAGENESIS OF GLN-73 AND LEU-384</scope>
    <scope>COFACTOR</scope>
    <scope>SUBUNIT</scope>
</reference>
<keyword id="KW-0002">3D-structure</keyword>
<keyword id="KW-0846">Cobalamin</keyword>
<keyword id="KW-0170">Cobalt</keyword>
<keyword id="KW-0903">Direct protein sequencing</keyword>
<keyword id="KW-0456">Lyase</keyword>
<keyword id="KW-0460">Magnesium</keyword>
<keyword id="KW-0479">Metal-binding</keyword>
<accession>Q05514</accession>
<sequence>MKIVDVLCTPGLTGFYFDDQRAIKKGAGHDGFTYTGSTVTEGFTQVRQKGESISVLLVLEDGQVAHGDCAAVQYSGAGGRDPLFLAKDFIPVIEKEIAPKLIGREITNFKPMAEEFDKMTVNGNRLHTAIRYGITQAILDAVAKTRKVTMAEVIRDEYNPGAEINAVPVFAQSGDDRYDNVDKMIIKEADVLPHALINNVEEKLGLKGEKLLEYVKWLRDRIIKLRVREDYAPIFHIDVYGTIGAAFDVDIKAMADYIQTLAEAAKPFHLRIEGPMDVEDRQKQMEAMRDLRAELDGRGVDAELVADEWCNTVEDVKFFTDNKAGHMVQIKTPDLGGVNNIADAIMYCKANGMGAYCGGTCNETNRSAEVTTNIGMACGARQVLAKPGMGVDEGMMIVKNEMNRVLALVGRRK</sequence>
<organism>
    <name type="scientific">Clostridium tetanomorphum</name>
    <dbReference type="NCBI Taxonomy" id="1553"/>
    <lineage>
        <taxon>Bacteria</taxon>
        <taxon>Bacillati</taxon>
        <taxon>Bacillota</taxon>
        <taxon>Clostridia</taxon>
        <taxon>Eubacteriales</taxon>
        <taxon>Clostridiaceae</taxon>
        <taxon>Clostridium</taxon>
    </lineage>
</organism>
<proteinExistence type="evidence at protein level"/>
<comment type="function">
    <text evidence="3 4 5 6">Involved in the methylaspartate cycle. Catalyzes the formation of the alpha,beta-unsaturated bond by the reversible anti elimination of ammonia from L-threo-beta-methylaspartate (L-threo-(2S,3S)-3-methylaspartate) to give mesaconate. It can also use L-erythro-beta-methylaspartate (L-erythro-(2S,3R)-3-methylaspartate), L-aspartate, fumarate and ethylfumarate as substrates.</text>
</comment>
<comment type="catalytic activity">
    <reaction evidence="3 4 5 6">
        <text>(2S,3S)-3-methyl-L-aspartate = mesaconate + NH4(+)</text>
        <dbReference type="Rhea" id="RHEA:12829"/>
        <dbReference type="ChEBI" id="CHEBI:28938"/>
        <dbReference type="ChEBI" id="CHEBI:36986"/>
        <dbReference type="ChEBI" id="CHEBI:58724"/>
        <dbReference type="EC" id="4.3.1.2"/>
    </reaction>
</comment>
<comment type="cofactor">
    <cofactor evidence="2 3 6">
        <name>Mg(2+)</name>
        <dbReference type="ChEBI" id="CHEBI:18420"/>
    </cofactor>
</comment>
<comment type="activity regulation">
    <text evidence="3">Inhibited by calcium ions.</text>
</comment>
<comment type="biophysicochemical properties">
    <kinetics>
        <KM evidence="3 4 5">0.65 mM for L-threo-beta-methylaspartate (with 4 mM of KCl at pH 9.76 and at 25 degrees Celsius)</KM>
        <KM evidence="3 4 5">0.67 mM for L-threo-beta-methylaspartate (with 50 mM of KCl at pH 9 and at 30 degrees Celsius)</KM>
        <KM evidence="3 4 5">0.7 mM for mesaconate (with 20 mM of MgCl(2) at pH 9 and at 30 degrees Celsius)</KM>
        <KM evidence="3 4 5">1 mM for L-threo-beta-methylaspartate (with 20 mM of MgCl(2) at pH 9 and at 30 degrees Celsius)</KM>
        <KM evidence="3 4 5">2.3 mM for L-aspartate (with 4 mM of KCl at pH 9.76 and at 25 degrees Celsius)</KM>
        <KM evidence="3 4 5">2.8 mM for L-threo-beta-methylaspartate (with 0.3 mM of KCl at pH 9 and at 30 degrees Celsius)</KM>
        <Vmax evidence="3 4 5">2089.0 umol/min/mg enzyme with L-threo-beta-methylaspartate as substrate (with 50 mM of KCl at pH 9 and at 30 degrees Celsius)</Vmax>
        <Vmax evidence="3 4 5">309.0 umol/min/mg enzyme with L-threo-beta-methylaspartate as substrate (with 0.3 mM of KCl at pH 9 and at 30 degrees Celsius)</Vmax>
        <Vmax evidence="3 4 5">266.0 umol/min/mg enzyme with L-threo-beta-methylaspartate as substrate (with 4 mM of KCl at pH 9.76 and at 25 degrees Celsius)</Vmax>
        <Vmax evidence="3 4 5">2.5 umol/min/mg enzyme with L-erythro-beta-methylaspartate as substrate (with 4 mM of KCl at pH 9.76 and at 25 degrees Celsius)</Vmax>
        <Vmax evidence="3 4 5">2.4 umol/min/mg enzyme with L-aspartate as substrate (with 4 mM of KCl at pH 9.76 and at 25 degrees Celsius)</Vmax>
        <text>kcat is 61 sec(-1) for amination of mesaconate (with 20 mM of MgCl(2) at pH 9 and at 30 degrees Celsius). kcat is 89 sec(-1) for deamination of L-threo-beta-methylaspartate (with 20 mM of MgCl(2) at pH 9 and at 30 degrees Celsius).</text>
    </kinetics>
    <phDependence>
        <text evidence="3 4 5">Optimum pH is 9.7.</text>
    </phDependence>
    <temperatureDependence>
        <text evidence="3 4 5">Optimum temperature is 55 degrees Celsius. It retains only half of its original activity after a 30 minutes incubation period at 50 degrees Celsius.</text>
    </temperatureDependence>
</comment>
<comment type="pathway">
    <text>Amino-acid degradation; L-glutamate degradation via mesaconate pathway; acetate and pyruvate from L-glutamate: step 2/4.</text>
</comment>
<comment type="subunit">
    <text evidence="2 4 5 6">Homodimer.</text>
</comment>
<comment type="similarity">
    <text evidence="7">Belongs to the methylaspartate ammonia-lyase family.</text>
</comment>
<dbReference type="EC" id="4.3.1.2"/>
<dbReference type="EMBL" id="S48141">
    <property type="protein sequence ID" value="AAB24070.1"/>
    <property type="molecule type" value="Genomic_DNA"/>
</dbReference>
<dbReference type="EMBL" id="X70499">
    <property type="protein sequence ID" value="CAA49911.1"/>
    <property type="molecule type" value="Genomic_DNA"/>
</dbReference>
<dbReference type="EMBL" id="X70695">
    <property type="protein sequence ID" value="CAA50027.1"/>
    <property type="molecule type" value="Genomic_DNA"/>
</dbReference>
<dbReference type="PIR" id="B44285">
    <property type="entry name" value="B44285"/>
</dbReference>
<dbReference type="RefSeq" id="WP_035147529.1">
    <property type="nucleotide sequence ID" value="NZ_JAAZWO010000006.1"/>
</dbReference>
<dbReference type="PDB" id="1KCZ">
    <property type="method" value="X-ray"/>
    <property type="resolution" value="1.90 A"/>
    <property type="chains" value="A/B=1-413"/>
</dbReference>
<dbReference type="PDB" id="1KD0">
    <property type="method" value="X-ray"/>
    <property type="resolution" value="1.90 A"/>
    <property type="chains" value="A/B=1-413"/>
</dbReference>
<dbReference type="PDB" id="3ZVH">
    <property type="method" value="X-ray"/>
    <property type="resolution" value="1.99 A"/>
    <property type="chains" value="A/B=1-413"/>
</dbReference>
<dbReference type="PDB" id="3ZVI">
    <property type="method" value="X-ray"/>
    <property type="resolution" value="1.90 A"/>
    <property type="chains" value="A/B=1-413"/>
</dbReference>
<dbReference type="PDBsum" id="1KCZ"/>
<dbReference type="PDBsum" id="1KD0"/>
<dbReference type="PDBsum" id="3ZVH"/>
<dbReference type="PDBsum" id="3ZVI"/>
<dbReference type="SMR" id="Q05514"/>
<dbReference type="DrugBank" id="DB03661">
    <property type="generic name" value="L-cysteic acid"/>
</dbReference>
<dbReference type="BioCyc" id="MetaCyc:MONOMER-1103"/>
<dbReference type="BRENDA" id="4.3.1.2">
    <property type="organism ID" value="1527"/>
</dbReference>
<dbReference type="UniPathway" id="UPA00561">
    <property type="reaction ID" value="UER00618"/>
</dbReference>
<dbReference type="EvolutionaryTrace" id="Q05514"/>
<dbReference type="GO" id="GO:0031419">
    <property type="term" value="F:cobalamin binding"/>
    <property type="evidence" value="ECO:0007669"/>
    <property type="project" value="UniProtKB-KW"/>
</dbReference>
<dbReference type="GO" id="GO:0046872">
    <property type="term" value="F:metal ion binding"/>
    <property type="evidence" value="ECO:0007669"/>
    <property type="project" value="UniProtKB-KW"/>
</dbReference>
<dbReference type="GO" id="GO:0050096">
    <property type="term" value="F:methylaspartate ammonia-lyase activity"/>
    <property type="evidence" value="ECO:0007669"/>
    <property type="project" value="UniProtKB-EC"/>
</dbReference>
<dbReference type="GO" id="GO:0019553">
    <property type="term" value="P:glutamate catabolic process via L-citramalate"/>
    <property type="evidence" value="ECO:0007669"/>
    <property type="project" value="UniProtKB-UniPathway"/>
</dbReference>
<dbReference type="CDD" id="cd03314">
    <property type="entry name" value="MAL"/>
    <property type="match status" value="1"/>
</dbReference>
<dbReference type="Gene3D" id="3.20.20.120">
    <property type="entry name" value="Enolase-like C-terminal domain"/>
    <property type="match status" value="1"/>
</dbReference>
<dbReference type="Gene3D" id="3.30.390.10">
    <property type="entry name" value="Enolase-like, N-terminal domain"/>
    <property type="match status" value="1"/>
</dbReference>
<dbReference type="InterPro" id="IPR036849">
    <property type="entry name" value="Enolase-like_C_sf"/>
</dbReference>
<dbReference type="InterPro" id="IPR029017">
    <property type="entry name" value="Enolase-like_N"/>
</dbReference>
<dbReference type="InterPro" id="IPR006395">
    <property type="entry name" value="Me_Asp_am_lyase"/>
</dbReference>
<dbReference type="InterPro" id="IPR022662">
    <property type="entry name" value="MeAsp_NH4-lyase_C"/>
</dbReference>
<dbReference type="InterPro" id="IPR022665">
    <property type="entry name" value="MeAsp_NH4-lyase_N"/>
</dbReference>
<dbReference type="NCBIfam" id="TIGR01502">
    <property type="entry name" value="B_methylAsp_ase"/>
    <property type="match status" value="1"/>
</dbReference>
<dbReference type="PANTHER" id="PTHR48073:SF2">
    <property type="entry name" value="O-SUCCINYLBENZOATE SYNTHASE"/>
    <property type="match status" value="1"/>
</dbReference>
<dbReference type="PANTHER" id="PTHR48073">
    <property type="entry name" value="O-SUCCINYLBENZOATE SYNTHASE-RELATED"/>
    <property type="match status" value="1"/>
</dbReference>
<dbReference type="Pfam" id="PF07476">
    <property type="entry name" value="MAAL_C"/>
    <property type="match status" value="1"/>
</dbReference>
<dbReference type="Pfam" id="PF05034">
    <property type="entry name" value="MAAL_N"/>
    <property type="match status" value="1"/>
</dbReference>
<dbReference type="PIRSF" id="PIRSF017107">
    <property type="entry name" value="MAL"/>
    <property type="match status" value="1"/>
</dbReference>
<dbReference type="SFLD" id="SFLDF00007">
    <property type="entry name" value="methylaspartate_ammonia-lyase"/>
    <property type="match status" value="1"/>
</dbReference>
<dbReference type="SFLD" id="SFLDG00151">
    <property type="entry name" value="methylaspartate_ammonia-lyase"/>
    <property type="match status" value="1"/>
</dbReference>
<dbReference type="SUPFAM" id="SSF51604">
    <property type="entry name" value="Enolase C-terminal domain-like"/>
    <property type="match status" value="1"/>
</dbReference>
<dbReference type="SUPFAM" id="SSF54826">
    <property type="entry name" value="Enolase N-terminal domain-like"/>
    <property type="match status" value="1"/>
</dbReference>
<protein>
    <recommendedName>
        <fullName>Methylaspartate ammonia-lyase</fullName>
        <shortName>MAL</shortName>
        <ecNumber>4.3.1.2</ecNumber>
    </recommendedName>
    <alternativeName>
        <fullName>3-methylaspartase ammonia-lyase</fullName>
    </alternativeName>
    <alternativeName>
        <fullName>Beta-methylaspartase</fullName>
    </alternativeName>
</protein>